<reference key="1">
    <citation type="journal article" date="2005" name="J. Infect. Dis.">
        <title>Genome sequence of a serotype M28 strain of group A Streptococcus: potential new insights into puerperal sepsis and bacterial disease specificity.</title>
        <authorList>
            <person name="Green N.M."/>
            <person name="Zhang S."/>
            <person name="Porcella S.F."/>
            <person name="Nagiec M.J."/>
            <person name="Barbian K.D."/>
            <person name="Beres S.B."/>
            <person name="Lefebvre R.B."/>
            <person name="Musser J.M."/>
        </authorList>
    </citation>
    <scope>NUCLEOTIDE SEQUENCE [LARGE SCALE GENOMIC DNA]</scope>
    <source>
        <strain>MGAS6180</strain>
    </source>
</reference>
<sequence>MSEKNAYAKSGVDVEAGYEVVERIKKHVARTERAGVMGALGGFGGMFDLSKTGVREPVLVSGTDGVGTKLMLAIKYDKHDTIGQDCVAMCVNDIIAAGAEPLYFLDYVATGKNNPVKFEEVVSGVAEGCVQAGAALIGGETAEMPGMYGEDDYDLAGFAVGVAEKSQLIDGSKVKEGDILLGLASSGIHSNGYSLVRRVFADYTGKELLPELEGKQLKDVLLEPTRIYVRAALPLIKEELINGIGHITGGGFIENVPRMFADDLAAEIDEDKVPVLPIFKALEKYGDIKHEEMFEIFNMGVGLMLAVSPENVNRVKELLDEPVYEIGRIIKKADDSVVIK</sequence>
<name>PUR5_STRPM</name>
<evidence type="ECO:0000255" key="1">
    <source>
        <dbReference type="HAMAP-Rule" id="MF_00741"/>
    </source>
</evidence>
<comment type="catalytic activity">
    <reaction evidence="1">
        <text>2-formamido-N(1)-(5-O-phospho-beta-D-ribosyl)acetamidine + ATP = 5-amino-1-(5-phospho-beta-D-ribosyl)imidazole + ADP + phosphate + H(+)</text>
        <dbReference type="Rhea" id="RHEA:23032"/>
        <dbReference type="ChEBI" id="CHEBI:15378"/>
        <dbReference type="ChEBI" id="CHEBI:30616"/>
        <dbReference type="ChEBI" id="CHEBI:43474"/>
        <dbReference type="ChEBI" id="CHEBI:137981"/>
        <dbReference type="ChEBI" id="CHEBI:147287"/>
        <dbReference type="ChEBI" id="CHEBI:456216"/>
        <dbReference type="EC" id="6.3.3.1"/>
    </reaction>
</comment>
<comment type="pathway">
    <text evidence="1">Purine metabolism; IMP biosynthesis via de novo pathway; 5-amino-1-(5-phospho-D-ribosyl)imidazole from N(2)-formyl-N(1)-(5-phospho-D-ribosyl)glycinamide: step 2/2.</text>
</comment>
<comment type="subcellular location">
    <subcellularLocation>
        <location evidence="1">Cytoplasm</location>
    </subcellularLocation>
</comment>
<comment type="similarity">
    <text evidence="1">Belongs to the AIR synthase family.</text>
</comment>
<feature type="chain" id="PRO_0000258416" description="Phosphoribosylformylglycinamidine cyclo-ligase">
    <location>
        <begin position="1"/>
        <end position="340"/>
    </location>
</feature>
<gene>
    <name evidence="1" type="primary">purM</name>
    <name type="ordered locus">M28_Spy0025</name>
</gene>
<proteinExistence type="inferred from homology"/>
<dbReference type="EC" id="6.3.3.1" evidence="1"/>
<dbReference type="EMBL" id="CP000056">
    <property type="protein sequence ID" value="AAX71139.1"/>
    <property type="molecule type" value="Genomic_DNA"/>
</dbReference>
<dbReference type="RefSeq" id="WP_011284404.1">
    <property type="nucleotide sequence ID" value="NC_007296.2"/>
</dbReference>
<dbReference type="SMR" id="Q48VX3"/>
<dbReference type="KEGG" id="spb:M28_Spy0025"/>
<dbReference type="HOGENOM" id="CLU_047116_0_0_9"/>
<dbReference type="UniPathway" id="UPA00074">
    <property type="reaction ID" value="UER00129"/>
</dbReference>
<dbReference type="GO" id="GO:0005829">
    <property type="term" value="C:cytosol"/>
    <property type="evidence" value="ECO:0007669"/>
    <property type="project" value="TreeGrafter"/>
</dbReference>
<dbReference type="GO" id="GO:0005524">
    <property type="term" value="F:ATP binding"/>
    <property type="evidence" value="ECO:0007669"/>
    <property type="project" value="UniProtKB-KW"/>
</dbReference>
<dbReference type="GO" id="GO:0004637">
    <property type="term" value="F:phosphoribosylamine-glycine ligase activity"/>
    <property type="evidence" value="ECO:0007669"/>
    <property type="project" value="TreeGrafter"/>
</dbReference>
<dbReference type="GO" id="GO:0004641">
    <property type="term" value="F:phosphoribosylformylglycinamidine cyclo-ligase activity"/>
    <property type="evidence" value="ECO:0007669"/>
    <property type="project" value="UniProtKB-UniRule"/>
</dbReference>
<dbReference type="GO" id="GO:0006189">
    <property type="term" value="P:'de novo' IMP biosynthetic process"/>
    <property type="evidence" value="ECO:0007669"/>
    <property type="project" value="UniProtKB-UniRule"/>
</dbReference>
<dbReference type="GO" id="GO:0046084">
    <property type="term" value="P:adenine biosynthetic process"/>
    <property type="evidence" value="ECO:0007669"/>
    <property type="project" value="TreeGrafter"/>
</dbReference>
<dbReference type="CDD" id="cd02196">
    <property type="entry name" value="PurM"/>
    <property type="match status" value="1"/>
</dbReference>
<dbReference type="FunFam" id="3.30.1330.10:FF:000001">
    <property type="entry name" value="Phosphoribosylformylglycinamidine cyclo-ligase"/>
    <property type="match status" value="1"/>
</dbReference>
<dbReference type="FunFam" id="3.90.650.10:FF:000011">
    <property type="entry name" value="Phosphoribosylformylglycinamidine cyclo-ligase"/>
    <property type="match status" value="1"/>
</dbReference>
<dbReference type="Gene3D" id="3.90.650.10">
    <property type="entry name" value="PurM-like C-terminal domain"/>
    <property type="match status" value="1"/>
</dbReference>
<dbReference type="Gene3D" id="3.30.1330.10">
    <property type="entry name" value="PurM-like, N-terminal domain"/>
    <property type="match status" value="1"/>
</dbReference>
<dbReference type="HAMAP" id="MF_00741">
    <property type="entry name" value="AIRS"/>
    <property type="match status" value="1"/>
</dbReference>
<dbReference type="InterPro" id="IPR010918">
    <property type="entry name" value="PurM-like_C_dom"/>
</dbReference>
<dbReference type="InterPro" id="IPR036676">
    <property type="entry name" value="PurM-like_C_sf"/>
</dbReference>
<dbReference type="InterPro" id="IPR016188">
    <property type="entry name" value="PurM-like_N"/>
</dbReference>
<dbReference type="InterPro" id="IPR036921">
    <property type="entry name" value="PurM-like_N_sf"/>
</dbReference>
<dbReference type="InterPro" id="IPR004733">
    <property type="entry name" value="PurM_cligase"/>
</dbReference>
<dbReference type="NCBIfam" id="TIGR00878">
    <property type="entry name" value="purM"/>
    <property type="match status" value="1"/>
</dbReference>
<dbReference type="PANTHER" id="PTHR10520:SF12">
    <property type="entry name" value="TRIFUNCTIONAL PURINE BIOSYNTHETIC PROTEIN ADENOSINE-3"/>
    <property type="match status" value="1"/>
</dbReference>
<dbReference type="PANTHER" id="PTHR10520">
    <property type="entry name" value="TRIFUNCTIONAL PURINE BIOSYNTHETIC PROTEIN ADENOSINE-3-RELATED"/>
    <property type="match status" value="1"/>
</dbReference>
<dbReference type="Pfam" id="PF00586">
    <property type="entry name" value="AIRS"/>
    <property type="match status" value="1"/>
</dbReference>
<dbReference type="Pfam" id="PF02769">
    <property type="entry name" value="AIRS_C"/>
    <property type="match status" value="1"/>
</dbReference>
<dbReference type="SUPFAM" id="SSF56042">
    <property type="entry name" value="PurM C-terminal domain-like"/>
    <property type="match status" value="1"/>
</dbReference>
<dbReference type="SUPFAM" id="SSF55326">
    <property type="entry name" value="PurM N-terminal domain-like"/>
    <property type="match status" value="1"/>
</dbReference>
<organism>
    <name type="scientific">Streptococcus pyogenes serotype M28 (strain MGAS6180)</name>
    <dbReference type="NCBI Taxonomy" id="319701"/>
    <lineage>
        <taxon>Bacteria</taxon>
        <taxon>Bacillati</taxon>
        <taxon>Bacillota</taxon>
        <taxon>Bacilli</taxon>
        <taxon>Lactobacillales</taxon>
        <taxon>Streptococcaceae</taxon>
        <taxon>Streptococcus</taxon>
    </lineage>
</organism>
<keyword id="KW-0067">ATP-binding</keyword>
<keyword id="KW-0963">Cytoplasm</keyword>
<keyword id="KW-0436">Ligase</keyword>
<keyword id="KW-0547">Nucleotide-binding</keyword>
<keyword id="KW-0658">Purine biosynthesis</keyword>
<protein>
    <recommendedName>
        <fullName evidence="1">Phosphoribosylformylglycinamidine cyclo-ligase</fullName>
        <ecNumber evidence="1">6.3.3.1</ecNumber>
    </recommendedName>
    <alternativeName>
        <fullName evidence="1">AIR synthase</fullName>
    </alternativeName>
    <alternativeName>
        <fullName evidence="1">AIRS</fullName>
    </alternativeName>
    <alternativeName>
        <fullName evidence="1">Phosphoribosyl-aminoimidazole synthetase</fullName>
    </alternativeName>
</protein>
<accession>Q48VX3</accession>